<accession>A6VQJ4</accession>
<name>RNH2_ACTSZ</name>
<gene>
    <name evidence="1" type="primary">rnhB</name>
    <name type="ordered locus">Asuc_1892</name>
</gene>
<organism>
    <name type="scientific">Actinobacillus succinogenes (strain ATCC 55618 / DSM 22257 / CCUG 43843 / 130Z)</name>
    <dbReference type="NCBI Taxonomy" id="339671"/>
    <lineage>
        <taxon>Bacteria</taxon>
        <taxon>Pseudomonadati</taxon>
        <taxon>Pseudomonadota</taxon>
        <taxon>Gammaproteobacteria</taxon>
        <taxon>Pasteurellales</taxon>
        <taxon>Pasteurellaceae</taxon>
        <taxon>Actinobacillus</taxon>
    </lineage>
</organism>
<evidence type="ECO:0000255" key="1">
    <source>
        <dbReference type="HAMAP-Rule" id="MF_00052"/>
    </source>
</evidence>
<evidence type="ECO:0000255" key="2">
    <source>
        <dbReference type="PROSITE-ProRule" id="PRU01319"/>
    </source>
</evidence>
<reference key="1">
    <citation type="journal article" date="2010" name="BMC Genomics">
        <title>A genomic perspective on the potential of Actinobacillus succinogenes for industrial succinate production.</title>
        <authorList>
            <person name="McKinlay J.B."/>
            <person name="Laivenieks M."/>
            <person name="Schindler B.D."/>
            <person name="McKinlay A.A."/>
            <person name="Siddaramappa S."/>
            <person name="Challacombe J.F."/>
            <person name="Lowry S.R."/>
            <person name="Clum A."/>
            <person name="Lapidus A.L."/>
            <person name="Burkhart K.B."/>
            <person name="Harkins V."/>
            <person name="Vieille C."/>
        </authorList>
    </citation>
    <scope>NUCLEOTIDE SEQUENCE [LARGE SCALE GENOMIC DNA]</scope>
    <source>
        <strain>ATCC 55618 / DSM 22257 / CCUG 43843 / 130Z</strain>
    </source>
</reference>
<proteinExistence type="inferred from homology"/>
<dbReference type="EC" id="3.1.26.4" evidence="1"/>
<dbReference type="EMBL" id="CP000746">
    <property type="protein sequence ID" value="ABR75241.1"/>
    <property type="molecule type" value="Genomic_DNA"/>
</dbReference>
<dbReference type="RefSeq" id="WP_012073618.1">
    <property type="nucleotide sequence ID" value="NC_009655.1"/>
</dbReference>
<dbReference type="SMR" id="A6VQJ4"/>
<dbReference type="STRING" id="339671.Asuc_1892"/>
<dbReference type="KEGG" id="asu:Asuc_1892"/>
<dbReference type="eggNOG" id="COG0164">
    <property type="taxonomic scope" value="Bacteria"/>
</dbReference>
<dbReference type="HOGENOM" id="CLU_036532_3_2_6"/>
<dbReference type="OrthoDB" id="9803420at2"/>
<dbReference type="Proteomes" id="UP000001114">
    <property type="component" value="Chromosome"/>
</dbReference>
<dbReference type="GO" id="GO:0005737">
    <property type="term" value="C:cytoplasm"/>
    <property type="evidence" value="ECO:0007669"/>
    <property type="project" value="UniProtKB-SubCell"/>
</dbReference>
<dbReference type="GO" id="GO:0032299">
    <property type="term" value="C:ribonuclease H2 complex"/>
    <property type="evidence" value="ECO:0007669"/>
    <property type="project" value="TreeGrafter"/>
</dbReference>
<dbReference type="GO" id="GO:0030145">
    <property type="term" value="F:manganese ion binding"/>
    <property type="evidence" value="ECO:0007669"/>
    <property type="project" value="UniProtKB-UniRule"/>
</dbReference>
<dbReference type="GO" id="GO:0003723">
    <property type="term" value="F:RNA binding"/>
    <property type="evidence" value="ECO:0007669"/>
    <property type="project" value="InterPro"/>
</dbReference>
<dbReference type="GO" id="GO:0004523">
    <property type="term" value="F:RNA-DNA hybrid ribonuclease activity"/>
    <property type="evidence" value="ECO:0007669"/>
    <property type="project" value="UniProtKB-UniRule"/>
</dbReference>
<dbReference type="GO" id="GO:0043137">
    <property type="term" value="P:DNA replication, removal of RNA primer"/>
    <property type="evidence" value="ECO:0007669"/>
    <property type="project" value="TreeGrafter"/>
</dbReference>
<dbReference type="GO" id="GO:0006298">
    <property type="term" value="P:mismatch repair"/>
    <property type="evidence" value="ECO:0007669"/>
    <property type="project" value="TreeGrafter"/>
</dbReference>
<dbReference type="CDD" id="cd07182">
    <property type="entry name" value="RNase_HII_bacteria_HII_like"/>
    <property type="match status" value="1"/>
</dbReference>
<dbReference type="FunFam" id="3.30.420.10:FF:000006">
    <property type="entry name" value="Ribonuclease HII"/>
    <property type="match status" value="1"/>
</dbReference>
<dbReference type="Gene3D" id="3.30.420.10">
    <property type="entry name" value="Ribonuclease H-like superfamily/Ribonuclease H"/>
    <property type="match status" value="1"/>
</dbReference>
<dbReference type="HAMAP" id="MF_00052_B">
    <property type="entry name" value="RNase_HII_B"/>
    <property type="match status" value="1"/>
</dbReference>
<dbReference type="InterPro" id="IPR022898">
    <property type="entry name" value="RNase_HII"/>
</dbReference>
<dbReference type="InterPro" id="IPR001352">
    <property type="entry name" value="RNase_HII/HIII"/>
</dbReference>
<dbReference type="InterPro" id="IPR024567">
    <property type="entry name" value="RNase_HII/HIII_dom"/>
</dbReference>
<dbReference type="InterPro" id="IPR012337">
    <property type="entry name" value="RNaseH-like_sf"/>
</dbReference>
<dbReference type="InterPro" id="IPR036397">
    <property type="entry name" value="RNaseH_sf"/>
</dbReference>
<dbReference type="NCBIfam" id="NF000594">
    <property type="entry name" value="PRK00015.1-1"/>
    <property type="match status" value="1"/>
</dbReference>
<dbReference type="NCBIfam" id="NF000595">
    <property type="entry name" value="PRK00015.1-3"/>
    <property type="match status" value="1"/>
</dbReference>
<dbReference type="NCBIfam" id="NF000596">
    <property type="entry name" value="PRK00015.1-4"/>
    <property type="match status" value="1"/>
</dbReference>
<dbReference type="PANTHER" id="PTHR10954">
    <property type="entry name" value="RIBONUCLEASE H2 SUBUNIT A"/>
    <property type="match status" value="1"/>
</dbReference>
<dbReference type="PANTHER" id="PTHR10954:SF18">
    <property type="entry name" value="RIBONUCLEASE HII"/>
    <property type="match status" value="1"/>
</dbReference>
<dbReference type="Pfam" id="PF01351">
    <property type="entry name" value="RNase_HII"/>
    <property type="match status" value="1"/>
</dbReference>
<dbReference type="SUPFAM" id="SSF53098">
    <property type="entry name" value="Ribonuclease H-like"/>
    <property type="match status" value="1"/>
</dbReference>
<dbReference type="PROSITE" id="PS51975">
    <property type="entry name" value="RNASE_H_2"/>
    <property type="match status" value="1"/>
</dbReference>
<sequence>MSEFEYPQGYGLIAGVDEVGRGPLVGAVVTAAVILDPNNPISGLADSKKLSEKKRLVLAAEIKEKALAWSLGRAEAEEIDELNILHATMLAMRRAVKSLKILPHLVLVDGNRVPELDMPAQAIIKGDGKVAEISAASILAKVARDQEMETLDKQFPQYEFAKHKGYPTKVHLEKLMRFGALPQHRRSFAPVRKAIEEFNRTQ</sequence>
<protein>
    <recommendedName>
        <fullName evidence="1">Ribonuclease HII</fullName>
        <shortName evidence="1">RNase HII</shortName>
        <ecNumber evidence="1">3.1.26.4</ecNumber>
    </recommendedName>
</protein>
<feature type="chain" id="PRO_1000071135" description="Ribonuclease HII">
    <location>
        <begin position="1"/>
        <end position="202"/>
    </location>
</feature>
<feature type="domain" description="RNase H type-2" evidence="2">
    <location>
        <begin position="11"/>
        <end position="200"/>
    </location>
</feature>
<feature type="binding site" evidence="1">
    <location>
        <position position="17"/>
    </location>
    <ligand>
        <name>a divalent metal cation</name>
        <dbReference type="ChEBI" id="CHEBI:60240"/>
    </ligand>
</feature>
<feature type="binding site" evidence="1">
    <location>
        <position position="18"/>
    </location>
    <ligand>
        <name>a divalent metal cation</name>
        <dbReference type="ChEBI" id="CHEBI:60240"/>
    </ligand>
</feature>
<feature type="binding site" evidence="1">
    <location>
        <position position="109"/>
    </location>
    <ligand>
        <name>a divalent metal cation</name>
        <dbReference type="ChEBI" id="CHEBI:60240"/>
    </ligand>
</feature>
<keyword id="KW-0963">Cytoplasm</keyword>
<keyword id="KW-0255">Endonuclease</keyword>
<keyword id="KW-0378">Hydrolase</keyword>
<keyword id="KW-0464">Manganese</keyword>
<keyword id="KW-0479">Metal-binding</keyword>
<keyword id="KW-0540">Nuclease</keyword>
<keyword id="KW-1185">Reference proteome</keyword>
<comment type="function">
    <text evidence="1">Endonuclease that specifically degrades the RNA of RNA-DNA hybrids.</text>
</comment>
<comment type="catalytic activity">
    <reaction evidence="1">
        <text>Endonucleolytic cleavage to 5'-phosphomonoester.</text>
        <dbReference type="EC" id="3.1.26.4"/>
    </reaction>
</comment>
<comment type="cofactor">
    <cofactor evidence="1">
        <name>Mn(2+)</name>
        <dbReference type="ChEBI" id="CHEBI:29035"/>
    </cofactor>
    <cofactor evidence="1">
        <name>Mg(2+)</name>
        <dbReference type="ChEBI" id="CHEBI:18420"/>
    </cofactor>
    <text evidence="1">Manganese or magnesium. Binds 1 divalent metal ion per monomer in the absence of substrate. May bind a second metal ion after substrate binding.</text>
</comment>
<comment type="subcellular location">
    <subcellularLocation>
        <location evidence="1">Cytoplasm</location>
    </subcellularLocation>
</comment>
<comment type="similarity">
    <text evidence="1">Belongs to the RNase HII family.</text>
</comment>